<proteinExistence type="inferred from homology"/>
<name>UREF_YERPP</name>
<protein>
    <recommendedName>
        <fullName evidence="1">Urease accessory protein UreF</fullName>
    </recommendedName>
</protein>
<reference key="1">
    <citation type="submission" date="2007-02" db="EMBL/GenBank/DDBJ databases">
        <title>Complete sequence of chromosome of Yersinia pestis Pestoides F.</title>
        <authorList>
            <consortium name="US DOE Joint Genome Institute"/>
            <person name="Copeland A."/>
            <person name="Lucas S."/>
            <person name="Lapidus A."/>
            <person name="Barry K."/>
            <person name="Detter J.C."/>
            <person name="Glavina del Rio T."/>
            <person name="Hammon N."/>
            <person name="Israni S."/>
            <person name="Dalin E."/>
            <person name="Tice H."/>
            <person name="Pitluck S."/>
            <person name="Di Bartolo G."/>
            <person name="Chain P."/>
            <person name="Malfatti S."/>
            <person name="Shin M."/>
            <person name="Vergez L."/>
            <person name="Schmutz J."/>
            <person name="Larimer F."/>
            <person name="Land M."/>
            <person name="Hauser L."/>
            <person name="Worsham P."/>
            <person name="Chu M."/>
            <person name="Bearden S."/>
            <person name="Garcia E."/>
            <person name="Richardson P."/>
        </authorList>
    </citation>
    <scope>NUCLEOTIDE SEQUENCE [LARGE SCALE GENOMIC DNA]</scope>
    <source>
        <strain>Pestoides F</strain>
    </source>
</reference>
<sequence length="228" mass="25037">MNASDLIRIMQFGDSVLPVGAFTFSNGVESAIQTGIVHDVATLKGFVLTALKQAASCDGMGVVVAHRAVVADDRDGIIRADWAVNNRKLNEESRLMATRMGKKLAEMSIHVVEHPLISWWLEQIKNGNTAGTYPVTQAVVMAAQGIGQREVVVMHQYGVAMTILSAAMRLMRVTHFDTQHILFELNHDIEKFCDIAEIGDINQMSSYVPIVDVLAAVHVKAHVRLFSN</sequence>
<feature type="chain" id="PRO_1000145151" description="Urease accessory protein UreF">
    <location>
        <begin position="1"/>
        <end position="228"/>
    </location>
</feature>
<gene>
    <name evidence="1" type="primary">ureF</name>
    <name type="ordered locus">YPDSF_1607</name>
</gene>
<accession>A4TL30</accession>
<comment type="function">
    <text evidence="1">Required for maturation of urease via the functional incorporation of the urease nickel metallocenter.</text>
</comment>
<comment type="subunit">
    <text evidence="1">UreD, UreF and UreG form a complex that acts as a GTP-hydrolysis-dependent molecular chaperone, activating the urease apoprotein by helping to assemble the nickel containing metallocenter of UreC. The UreE protein probably delivers the nickel.</text>
</comment>
<comment type="subcellular location">
    <subcellularLocation>
        <location evidence="1">Cytoplasm</location>
    </subcellularLocation>
</comment>
<comment type="similarity">
    <text evidence="1">Belongs to the UreF family.</text>
</comment>
<organism>
    <name type="scientific">Yersinia pestis (strain Pestoides F)</name>
    <dbReference type="NCBI Taxonomy" id="386656"/>
    <lineage>
        <taxon>Bacteria</taxon>
        <taxon>Pseudomonadati</taxon>
        <taxon>Pseudomonadota</taxon>
        <taxon>Gammaproteobacteria</taxon>
        <taxon>Enterobacterales</taxon>
        <taxon>Yersiniaceae</taxon>
        <taxon>Yersinia</taxon>
    </lineage>
</organism>
<evidence type="ECO:0000255" key="1">
    <source>
        <dbReference type="HAMAP-Rule" id="MF_01385"/>
    </source>
</evidence>
<keyword id="KW-0143">Chaperone</keyword>
<keyword id="KW-0963">Cytoplasm</keyword>
<keyword id="KW-0996">Nickel insertion</keyword>
<dbReference type="EMBL" id="CP000668">
    <property type="protein sequence ID" value="ABP39992.1"/>
    <property type="molecule type" value="Genomic_DNA"/>
</dbReference>
<dbReference type="RefSeq" id="WP_002212231.1">
    <property type="nucleotide sequence ID" value="NZ_CP009715.1"/>
</dbReference>
<dbReference type="SMR" id="A4TL30"/>
<dbReference type="KEGG" id="ypp:YPDSF_1607"/>
<dbReference type="PATRIC" id="fig|386656.14.peg.2160"/>
<dbReference type="GO" id="GO:0005737">
    <property type="term" value="C:cytoplasm"/>
    <property type="evidence" value="ECO:0007669"/>
    <property type="project" value="UniProtKB-SubCell"/>
</dbReference>
<dbReference type="GO" id="GO:0016151">
    <property type="term" value="F:nickel cation binding"/>
    <property type="evidence" value="ECO:0007669"/>
    <property type="project" value="UniProtKB-UniRule"/>
</dbReference>
<dbReference type="Gene3D" id="1.10.4190.10">
    <property type="entry name" value="Urease accessory protein UreF"/>
    <property type="match status" value="1"/>
</dbReference>
<dbReference type="HAMAP" id="MF_01385">
    <property type="entry name" value="UreF"/>
    <property type="match status" value="1"/>
</dbReference>
<dbReference type="InterPro" id="IPR002639">
    <property type="entry name" value="UreF"/>
</dbReference>
<dbReference type="InterPro" id="IPR038277">
    <property type="entry name" value="UreF_sf"/>
</dbReference>
<dbReference type="PANTHER" id="PTHR33620">
    <property type="entry name" value="UREASE ACCESSORY PROTEIN F"/>
    <property type="match status" value="1"/>
</dbReference>
<dbReference type="PANTHER" id="PTHR33620:SF1">
    <property type="entry name" value="UREASE ACCESSORY PROTEIN F"/>
    <property type="match status" value="1"/>
</dbReference>
<dbReference type="Pfam" id="PF01730">
    <property type="entry name" value="UreF"/>
    <property type="match status" value="1"/>
</dbReference>
<dbReference type="PIRSF" id="PIRSF009467">
    <property type="entry name" value="Ureas_acces_UreF"/>
    <property type="match status" value="1"/>
</dbReference>